<protein>
    <recommendedName>
        <fullName evidence="1">Glycerol kinase</fullName>
        <ecNumber evidence="1">2.7.1.30</ecNumber>
    </recommendedName>
    <alternativeName>
        <fullName evidence="1">ATP:glycerol 3-phosphotransferase</fullName>
    </alternativeName>
    <alternativeName>
        <fullName evidence="1">Glycerokinase</fullName>
        <shortName evidence="1">GK</shortName>
    </alternativeName>
</protein>
<proteinExistence type="inferred from homology"/>
<evidence type="ECO:0000255" key="1">
    <source>
        <dbReference type="HAMAP-Rule" id="MF_00186"/>
    </source>
</evidence>
<keyword id="KW-0067">ATP-binding</keyword>
<keyword id="KW-0319">Glycerol metabolism</keyword>
<keyword id="KW-0418">Kinase</keyword>
<keyword id="KW-0547">Nucleotide-binding</keyword>
<keyword id="KW-0808">Transferase</keyword>
<dbReference type="EC" id="2.7.1.30" evidence="1"/>
<dbReference type="EMBL" id="CP000709">
    <property type="protein sequence ID" value="ABQ62174.1"/>
    <property type="molecule type" value="Genomic_DNA"/>
</dbReference>
<dbReference type="RefSeq" id="WP_004687359.1">
    <property type="nucleotide sequence ID" value="NC_009504.1"/>
</dbReference>
<dbReference type="SMR" id="A5VUC1"/>
<dbReference type="GeneID" id="55592133"/>
<dbReference type="KEGG" id="bov:BOV_A0386"/>
<dbReference type="HOGENOM" id="CLU_009281_2_3_5"/>
<dbReference type="PhylomeDB" id="A5VUC1"/>
<dbReference type="UniPathway" id="UPA00618">
    <property type="reaction ID" value="UER00672"/>
</dbReference>
<dbReference type="PRO" id="PR:A5VUC1"/>
<dbReference type="Proteomes" id="UP000006383">
    <property type="component" value="Chromosome II"/>
</dbReference>
<dbReference type="GO" id="GO:0005829">
    <property type="term" value="C:cytosol"/>
    <property type="evidence" value="ECO:0007669"/>
    <property type="project" value="TreeGrafter"/>
</dbReference>
<dbReference type="GO" id="GO:0005524">
    <property type="term" value="F:ATP binding"/>
    <property type="evidence" value="ECO:0007669"/>
    <property type="project" value="UniProtKB-UniRule"/>
</dbReference>
<dbReference type="GO" id="GO:0004370">
    <property type="term" value="F:glycerol kinase activity"/>
    <property type="evidence" value="ECO:0000250"/>
    <property type="project" value="UniProtKB"/>
</dbReference>
<dbReference type="GO" id="GO:0019563">
    <property type="term" value="P:glycerol catabolic process"/>
    <property type="evidence" value="ECO:0007669"/>
    <property type="project" value="UniProtKB-UniRule"/>
</dbReference>
<dbReference type="GO" id="GO:0006071">
    <property type="term" value="P:glycerol metabolic process"/>
    <property type="evidence" value="ECO:0000250"/>
    <property type="project" value="UniProtKB"/>
</dbReference>
<dbReference type="GO" id="GO:0006072">
    <property type="term" value="P:glycerol-3-phosphate metabolic process"/>
    <property type="evidence" value="ECO:0007669"/>
    <property type="project" value="InterPro"/>
</dbReference>
<dbReference type="CDD" id="cd07786">
    <property type="entry name" value="FGGY_EcGK_like"/>
    <property type="match status" value="1"/>
</dbReference>
<dbReference type="FunFam" id="3.30.420.40:FF:000007">
    <property type="entry name" value="Glycerol kinase"/>
    <property type="match status" value="1"/>
</dbReference>
<dbReference type="FunFam" id="3.30.420.40:FF:000008">
    <property type="entry name" value="Glycerol kinase"/>
    <property type="match status" value="1"/>
</dbReference>
<dbReference type="Gene3D" id="3.30.420.40">
    <property type="match status" value="2"/>
</dbReference>
<dbReference type="HAMAP" id="MF_00186">
    <property type="entry name" value="Glycerol_kin"/>
    <property type="match status" value="1"/>
</dbReference>
<dbReference type="InterPro" id="IPR043129">
    <property type="entry name" value="ATPase_NBD"/>
</dbReference>
<dbReference type="InterPro" id="IPR000577">
    <property type="entry name" value="Carb_kinase_FGGY"/>
</dbReference>
<dbReference type="InterPro" id="IPR018483">
    <property type="entry name" value="Carb_kinase_FGGY_CS"/>
</dbReference>
<dbReference type="InterPro" id="IPR018485">
    <property type="entry name" value="FGGY_C"/>
</dbReference>
<dbReference type="InterPro" id="IPR018484">
    <property type="entry name" value="FGGY_N"/>
</dbReference>
<dbReference type="InterPro" id="IPR005999">
    <property type="entry name" value="Glycerol_kin"/>
</dbReference>
<dbReference type="NCBIfam" id="TIGR01311">
    <property type="entry name" value="glycerol_kin"/>
    <property type="match status" value="1"/>
</dbReference>
<dbReference type="NCBIfam" id="NF000756">
    <property type="entry name" value="PRK00047.1"/>
    <property type="match status" value="1"/>
</dbReference>
<dbReference type="PANTHER" id="PTHR10196:SF78">
    <property type="entry name" value="GLYCEROL KINASE"/>
    <property type="match status" value="1"/>
</dbReference>
<dbReference type="PANTHER" id="PTHR10196">
    <property type="entry name" value="SUGAR KINASE"/>
    <property type="match status" value="1"/>
</dbReference>
<dbReference type="Pfam" id="PF02782">
    <property type="entry name" value="FGGY_C"/>
    <property type="match status" value="1"/>
</dbReference>
<dbReference type="Pfam" id="PF00370">
    <property type="entry name" value="FGGY_N"/>
    <property type="match status" value="1"/>
</dbReference>
<dbReference type="PIRSF" id="PIRSF000538">
    <property type="entry name" value="GlpK"/>
    <property type="match status" value="1"/>
</dbReference>
<dbReference type="SUPFAM" id="SSF53067">
    <property type="entry name" value="Actin-like ATPase domain"/>
    <property type="match status" value="2"/>
</dbReference>
<dbReference type="PROSITE" id="PS00933">
    <property type="entry name" value="FGGY_KINASES_1"/>
    <property type="match status" value="1"/>
</dbReference>
<dbReference type="PROSITE" id="PS00445">
    <property type="entry name" value="FGGY_KINASES_2"/>
    <property type="match status" value="1"/>
</dbReference>
<gene>
    <name evidence="1" type="primary">glpK</name>
    <name type="ordered locus">BOV_A0386</name>
</gene>
<name>GLPK_BRUO2</name>
<reference key="1">
    <citation type="journal article" date="2009" name="PLoS ONE">
        <title>Genome degradation in Brucella ovis corresponds with narrowing of its host range and tissue tropism.</title>
        <authorList>
            <person name="Tsolis R.M."/>
            <person name="Seshadri R."/>
            <person name="Santos R.L."/>
            <person name="Sangari F.J."/>
            <person name="Lobo J.M."/>
            <person name="de Jong M.F."/>
            <person name="Ren Q."/>
            <person name="Myers G."/>
            <person name="Brinkac L.M."/>
            <person name="Nelson W.C."/>
            <person name="Deboy R.T."/>
            <person name="Angiuoli S."/>
            <person name="Khouri H."/>
            <person name="Dimitrov G."/>
            <person name="Robinson J.R."/>
            <person name="Mulligan S."/>
            <person name="Walker R.L."/>
            <person name="Elzer P.E."/>
            <person name="Hassan K.A."/>
            <person name="Paulsen I.T."/>
        </authorList>
    </citation>
    <scope>NUCLEOTIDE SEQUENCE [LARGE SCALE GENOMIC DNA]</scope>
    <source>
        <strain>ATCC 25840 / 63/290 / NCTC 10512</strain>
    </source>
</reference>
<organism>
    <name type="scientific">Brucella ovis (strain ATCC 25840 / 63/290 / NCTC 10512)</name>
    <dbReference type="NCBI Taxonomy" id="444178"/>
    <lineage>
        <taxon>Bacteria</taxon>
        <taxon>Pseudomonadati</taxon>
        <taxon>Pseudomonadota</taxon>
        <taxon>Alphaproteobacteria</taxon>
        <taxon>Hyphomicrobiales</taxon>
        <taxon>Brucellaceae</taxon>
        <taxon>Brucella/Ochrobactrum group</taxon>
        <taxon>Brucella</taxon>
    </lineage>
</organism>
<accession>A5VUC1</accession>
<comment type="function">
    <text evidence="1">Key enzyme in the regulation of glycerol uptake and metabolism. Catalyzes the phosphorylation of glycerol to yield sn-glycerol 3-phosphate.</text>
</comment>
<comment type="catalytic activity">
    <reaction evidence="1">
        <text>glycerol + ATP = sn-glycerol 3-phosphate + ADP + H(+)</text>
        <dbReference type="Rhea" id="RHEA:21644"/>
        <dbReference type="ChEBI" id="CHEBI:15378"/>
        <dbReference type="ChEBI" id="CHEBI:17754"/>
        <dbReference type="ChEBI" id="CHEBI:30616"/>
        <dbReference type="ChEBI" id="CHEBI:57597"/>
        <dbReference type="ChEBI" id="CHEBI:456216"/>
        <dbReference type="EC" id="2.7.1.30"/>
    </reaction>
</comment>
<comment type="activity regulation">
    <text evidence="1">Inhibited by fructose 1,6-bisphosphate (FBP).</text>
</comment>
<comment type="pathway">
    <text evidence="1">Polyol metabolism; glycerol degradation via glycerol kinase pathway; sn-glycerol 3-phosphate from glycerol: step 1/1.</text>
</comment>
<comment type="similarity">
    <text evidence="1">Belongs to the FGGY kinase family.</text>
</comment>
<sequence length="498" mass="54737">MSGYILAIDQGTTSTRSMLFDRNMRVVGLGQQEFTQHFPSSGWVEHDAEEIWKSVQSTIRIALAQAGISAADVAAIGITNQRETTVVWDRISGKPVHRAIVWQDRRTAQFCDELKRRNLEPLFTEKTGLLLDPYFSGTKLAWLLNHVPGLRERAQKGQVCFGTIDSWLIYKLTGGKAHVTDATNASRTLIYHIGENRWDDELLDILGIPAAMLPEVKDCAADFGMTDPALFGVSIPILGVAGDQQAAVIGNACFEPGMMKSTYGTGCFALLNTGTDRVTSSNRLLTTIAYRLDGVTTYALEGSIFIAGAAVQWLRDEMGFISVASEVSALAEKADPNQRIYLVPAFTGLGAPYWDAEARGAIFGLTRGTGRAEFARAALESVAYQTFDLLEAMQGDWKGATNHTVLRVDGGMVASDWTMQRLADILNAPVDRPVFLETTVLGAAWLAASRAGIWPDRKGFSERWQRDCRFEPAMPEKERESAIAGWRDSVSRCLTRPQ</sequence>
<feature type="chain" id="PRO_1000020708" description="Glycerol kinase">
    <location>
        <begin position="1"/>
        <end position="498"/>
    </location>
</feature>
<feature type="binding site" evidence="1">
    <location>
        <position position="12"/>
    </location>
    <ligand>
        <name>ADP</name>
        <dbReference type="ChEBI" id="CHEBI:456216"/>
    </ligand>
</feature>
<feature type="binding site" evidence="1">
    <location>
        <position position="12"/>
    </location>
    <ligand>
        <name>ATP</name>
        <dbReference type="ChEBI" id="CHEBI:30616"/>
    </ligand>
</feature>
<feature type="binding site" evidence="1">
    <location>
        <position position="12"/>
    </location>
    <ligand>
        <name>sn-glycerol 3-phosphate</name>
        <dbReference type="ChEBI" id="CHEBI:57597"/>
    </ligand>
</feature>
<feature type="binding site" evidence="1">
    <location>
        <position position="13"/>
    </location>
    <ligand>
        <name>ATP</name>
        <dbReference type="ChEBI" id="CHEBI:30616"/>
    </ligand>
</feature>
<feature type="binding site" evidence="1">
    <location>
        <position position="14"/>
    </location>
    <ligand>
        <name>ATP</name>
        <dbReference type="ChEBI" id="CHEBI:30616"/>
    </ligand>
</feature>
<feature type="binding site" evidence="1">
    <location>
        <position position="16"/>
    </location>
    <ligand>
        <name>ADP</name>
        <dbReference type="ChEBI" id="CHEBI:456216"/>
    </ligand>
</feature>
<feature type="binding site" evidence="1">
    <location>
        <position position="82"/>
    </location>
    <ligand>
        <name>glycerol</name>
        <dbReference type="ChEBI" id="CHEBI:17754"/>
    </ligand>
</feature>
<feature type="binding site" evidence="1">
    <location>
        <position position="82"/>
    </location>
    <ligand>
        <name>sn-glycerol 3-phosphate</name>
        <dbReference type="ChEBI" id="CHEBI:57597"/>
    </ligand>
</feature>
<feature type="binding site" evidence="1">
    <location>
        <position position="83"/>
    </location>
    <ligand>
        <name>glycerol</name>
        <dbReference type="ChEBI" id="CHEBI:17754"/>
    </ligand>
</feature>
<feature type="binding site" evidence="1">
    <location>
        <position position="83"/>
    </location>
    <ligand>
        <name>sn-glycerol 3-phosphate</name>
        <dbReference type="ChEBI" id="CHEBI:57597"/>
    </ligand>
</feature>
<feature type="binding site" evidence="1">
    <location>
        <position position="134"/>
    </location>
    <ligand>
        <name>glycerol</name>
        <dbReference type="ChEBI" id="CHEBI:17754"/>
    </ligand>
</feature>
<feature type="binding site" evidence="1">
    <location>
        <position position="134"/>
    </location>
    <ligand>
        <name>sn-glycerol 3-phosphate</name>
        <dbReference type="ChEBI" id="CHEBI:57597"/>
    </ligand>
</feature>
<feature type="binding site" evidence="1">
    <location>
        <position position="243"/>
    </location>
    <ligand>
        <name>glycerol</name>
        <dbReference type="ChEBI" id="CHEBI:17754"/>
    </ligand>
</feature>
<feature type="binding site" evidence="1">
    <location>
        <position position="243"/>
    </location>
    <ligand>
        <name>sn-glycerol 3-phosphate</name>
        <dbReference type="ChEBI" id="CHEBI:57597"/>
    </ligand>
</feature>
<feature type="binding site" evidence="1">
    <location>
        <position position="244"/>
    </location>
    <ligand>
        <name>glycerol</name>
        <dbReference type="ChEBI" id="CHEBI:17754"/>
    </ligand>
</feature>
<feature type="binding site" evidence="1">
    <location>
        <position position="265"/>
    </location>
    <ligand>
        <name>ADP</name>
        <dbReference type="ChEBI" id="CHEBI:456216"/>
    </ligand>
</feature>
<feature type="binding site" evidence="1">
    <location>
        <position position="265"/>
    </location>
    <ligand>
        <name>ATP</name>
        <dbReference type="ChEBI" id="CHEBI:30616"/>
    </ligand>
</feature>
<feature type="binding site" evidence="1">
    <location>
        <position position="308"/>
    </location>
    <ligand>
        <name>ADP</name>
        <dbReference type="ChEBI" id="CHEBI:456216"/>
    </ligand>
</feature>
<feature type="binding site" evidence="1">
    <location>
        <position position="308"/>
    </location>
    <ligand>
        <name>ATP</name>
        <dbReference type="ChEBI" id="CHEBI:30616"/>
    </ligand>
</feature>
<feature type="binding site" evidence="1">
    <location>
        <position position="312"/>
    </location>
    <ligand>
        <name>ATP</name>
        <dbReference type="ChEBI" id="CHEBI:30616"/>
    </ligand>
</feature>
<feature type="binding site" evidence="1">
    <location>
        <position position="411"/>
    </location>
    <ligand>
        <name>ADP</name>
        <dbReference type="ChEBI" id="CHEBI:456216"/>
    </ligand>
</feature>
<feature type="binding site" evidence="1">
    <location>
        <position position="411"/>
    </location>
    <ligand>
        <name>ATP</name>
        <dbReference type="ChEBI" id="CHEBI:30616"/>
    </ligand>
</feature>